<comment type="catalytic activity">
    <reaction evidence="1">
        <text>aldehydo-D-galactose 6-phosphate = keto-D-tagatose 6-phosphate</text>
        <dbReference type="Rhea" id="RHEA:13033"/>
        <dbReference type="ChEBI" id="CHEBI:58255"/>
        <dbReference type="ChEBI" id="CHEBI:134283"/>
        <dbReference type="EC" id="5.3.1.26"/>
    </reaction>
</comment>
<comment type="pathway">
    <text evidence="1">Carbohydrate metabolism; D-galactose 6-phosphate degradation; D-tagatose 6-phosphate from D-galactose 6-phosphate: step 1/1.</text>
</comment>
<comment type="subunit">
    <text evidence="1">Heteromultimeric protein consisting of LacA and LacB.</text>
</comment>
<comment type="similarity">
    <text evidence="1">Belongs to the LacAB/RpiB family.</text>
</comment>
<accession>Q833U3</accession>
<dbReference type="EC" id="5.3.1.26" evidence="1"/>
<dbReference type="EMBL" id="AE016830">
    <property type="protein sequence ID" value="AAO81600.1"/>
    <property type="molecule type" value="Genomic_DNA"/>
</dbReference>
<dbReference type="RefSeq" id="NP_815530.1">
    <property type="nucleotide sequence ID" value="NC_004668.1"/>
</dbReference>
<dbReference type="RefSeq" id="WP_002357188.1">
    <property type="nucleotide sequence ID" value="NZ_KE136528.1"/>
</dbReference>
<dbReference type="SMR" id="Q833U3"/>
<dbReference type="STRING" id="226185.EF_1835"/>
<dbReference type="EnsemblBacteria" id="AAO81600">
    <property type="protein sequence ID" value="AAO81600"/>
    <property type="gene ID" value="EF_1835"/>
</dbReference>
<dbReference type="GeneID" id="60894135"/>
<dbReference type="KEGG" id="efa:EF1835"/>
<dbReference type="PATRIC" id="fig|226185.45.peg.1685"/>
<dbReference type="eggNOG" id="COG0698">
    <property type="taxonomic scope" value="Bacteria"/>
</dbReference>
<dbReference type="HOGENOM" id="CLU_091396_4_2_9"/>
<dbReference type="UniPathway" id="UPA00702">
    <property type="reaction ID" value="UER00714"/>
</dbReference>
<dbReference type="Proteomes" id="UP000001415">
    <property type="component" value="Chromosome"/>
</dbReference>
<dbReference type="GO" id="GO:0050044">
    <property type="term" value="F:galactose-6-phosphate isomerase activity"/>
    <property type="evidence" value="ECO:0007669"/>
    <property type="project" value="UniProtKB-UniRule"/>
</dbReference>
<dbReference type="GO" id="GO:0004751">
    <property type="term" value="F:ribose-5-phosphate isomerase activity"/>
    <property type="evidence" value="ECO:0007669"/>
    <property type="project" value="TreeGrafter"/>
</dbReference>
<dbReference type="GO" id="GO:0019316">
    <property type="term" value="P:D-allose catabolic process"/>
    <property type="evidence" value="ECO:0007669"/>
    <property type="project" value="TreeGrafter"/>
</dbReference>
<dbReference type="GO" id="GO:0019388">
    <property type="term" value="P:galactose catabolic process"/>
    <property type="evidence" value="ECO:0007669"/>
    <property type="project" value="UniProtKB-UniPathway"/>
</dbReference>
<dbReference type="GO" id="GO:0019512">
    <property type="term" value="P:lactose catabolic process via tagatose-6-phosphate"/>
    <property type="evidence" value="ECO:0007669"/>
    <property type="project" value="UniProtKB-UniRule"/>
</dbReference>
<dbReference type="GO" id="GO:0009052">
    <property type="term" value="P:pentose-phosphate shunt, non-oxidative branch"/>
    <property type="evidence" value="ECO:0007669"/>
    <property type="project" value="TreeGrafter"/>
</dbReference>
<dbReference type="Gene3D" id="3.40.1400.10">
    <property type="entry name" value="Sugar-phosphate isomerase, RpiB/LacA/LacB"/>
    <property type="match status" value="1"/>
</dbReference>
<dbReference type="HAMAP" id="MF_01555">
    <property type="entry name" value="LacA"/>
    <property type="match status" value="1"/>
</dbReference>
<dbReference type="InterPro" id="IPR004783">
    <property type="entry name" value="LacA"/>
</dbReference>
<dbReference type="InterPro" id="IPR003500">
    <property type="entry name" value="RpiB_LacA_LacB"/>
</dbReference>
<dbReference type="InterPro" id="IPR036569">
    <property type="entry name" value="RpiB_LacA_LacB_sf"/>
</dbReference>
<dbReference type="NCBIfam" id="TIGR01118">
    <property type="entry name" value="lacA"/>
    <property type="match status" value="1"/>
</dbReference>
<dbReference type="NCBIfam" id="NF006380">
    <property type="entry name" value="PRK08621.1"/>
    <property type="match status" value="1"/>
</dbReference>
<dbReference type="NCBIfam" id="TIGR00689">
    <property type="entry name" value="rpiB_lacA_lacB"/>
    <property type="match status" value="1"/>
</dbReference>
<dbReference type="PANTHER" id="PTHR30345:SF5">
    <property type="entry name" value="GALACTOSE-6-PHOSPHATE ISOMERASE SUBUNIT LACA"/>
    <property type="match status" value="1"/>
</dbReference>
<dbReference type="PANTHER" id="PTHR30345">
    <property type="entry name" value="RIBOSE-5-PHOSPHATE ISOMERASE B"/>
    <property type="match status" value="1"/>
</dbReference>
<dbReference type="Pfam" id="PF02502">
    <property type="entry name" value="LacAB_rpiB"/>
    <property type="match status" value="1"/>
</dbReference>
<dbReference type="PIRSF" id="PIRSF005384">
    <property type="entry name" value="RpiB_LacA_B"/>
    <property type="match status" value="1"/>
</dbReference>
<dbReference type="SUPFAM" id="SSF89623">
    <property type="entry name" value="Ribose/Galactose isomerase RpiB/AlsB"/>
    <property type="match status" value="1"/>
</dbReference>
<proteinExistence type="inferred from homology"/>
<name>LACA_ENTFA</name>
<evidence type="ECO:0000255" key="1">
    <source>
        <dbReference type="HAMAP-Rule" id="MF_01555"/>
    </source>
</evidence>
<feature type="chain" id="PRO_0000208103" description="Galactose-6-phosphate isomerase subunit LacA">
    <location>
        <begin position="1"/>
        <end position="142"/>
    </location>
</feature>
<gene>
    <name evidence="1" type="primary">lacA</name>
    <name type="ordered locus">EF_1835</name>
</gene>
<reference key="1">
    <citation type="journal article" date="2003" name="Science">
        <title>Role of mobile DNA in the evolution of vancomycin-resistant Enterococcus faecalis.</title>
        <authorList>
            <person name="Paulsen I.T."/>
            <person name="Banerjei L."/>
            <person name="Myers G.S.A."/>
            <person name="Nelson K.E."/>
            <person name="Seshadri R."/>
            <person name="Read T.D."/>
            <person name="Fouts D.E."/>
            <person name="Eisen J.A."/>
            <person name="Gill S.R."/>
            <person name="Heidelberg J.F."/>
            <person name="Tettelin H."/>
            <person name="Dodson R.J."/>
            <person name="Umayam L.A."/>
            <person name="Brinkac L.M."/>
            <person name="Beanan M.J."/>
            <person name="Daugherty S.C."/>
            <person name="DeBoy R.T."/>
            <person name="Durkin S.A."/>
            <person name="Kolonay J.F."/>
            <person name="Madupu R."/>
            <person name="Nelson W.C."/>
            <person name="Vamathevan J.J."/>
            <person name="Tran B."/>
            <person name="Upton J."/>
            <person name="Hansen T."/>
            <person name="Shetty J."/>
            <person name="Khouri H.M."/>
            <person name="Utterback T.R."/>
            <person name="Radune D."/>
            <person name="Ketchum K.A."/>
            <person name="Dougherty B.A."/>
            <person name="Fraser C.M."/>
        </authorList>
    </citation>
    <scope>NUCLEOTIDE SEQUENCE [LARGE SCALE GENOMIC DNA]</scope>
    <source>
        <strain>ATCC 700802 / V583</strain>
    </source>
</reference>
<keyword id="KW-0413">Isomerase</keyword>
<keyword id="KW-0423">Lactose metabolism</keyword>
<keyword id="KW-1185">Reference proteome</keyword>
<organism>
    <name type="scientific">Enterococcus faecalis (strain ATCC 700802 / V583)</name>
    <dbReference type="NCBI Taxonomy" id="226185"/>
    <lineage>
        <taxon>Bacteria</taxon>
        <taxon>Bacillati</taxon>
        <taxon>Bacillota</taxon>
        <taxon>Bacilli</taxon>
        <taxon>Lactobacillales</taxon>
        <taxon>Enterococcaceae</taxon>
        <taxon>Enterococcus</taxon>
    </lineage>
</organism>
<sequence length="142" mass="15605">MRVILGSDLDGIKLKAEMKQYLLQEKVEVIDKSESASEDFIEATLAVAHEVLKDTESLGIVFDGYGAGSFMTAAKIKGMIVAELSDERSAYMAREHNNARMITVGAKIVGTELAKNIIKEFLTGHYAGGRHQIRVDMLNKMA</sequence>
<protein>
    <recommendedName>
        <fullName evidence="1">Galactose-6-phosphate isomerase subunit LacA</fullName>
        <ecNumber evidence="1">5.3.1.26</ecNumber>
    </recommendedName>
</protein>